<organismHost>
    <name type="scientific">Streptococcus pneumoniae</name>
    <dbReference type="NCBI Taxonomy" id="1313"/>
</organismHost>
<proteinExistence type="predicted"/>
<reference key="1">
    <citation type="journal article" date="2011" name="J. Bacteriol.">
        <title>Genome annotation and intraviral interactome for the Streptococcus pneumoniae virulent phage Dp-1.</title>
        <authorList>
            <person name="Sabri M."/>
            <person name="Hauser R."/>
            <person name="Ouellette M."/>
            <person name="Liu J."/>
            <person name="Dehbi M."/>
            <person name="Moeck G."/>
            <person name="Garcia E."/>
            <person name="Titz B."/>
            <person name="Uetz P."/>
            <person name="Moineau S."/>
        </authorList>
    </citation>
    <scope>NUCLEOTIDE SEQUENCE [GENOMIC DNA]</scope>
</reference>
<reference key="2">
    <citation type="journal article" date="2011" name="BMC Bioinformatics">
        <title>The evolution of the tape measure protein: units, duplications and losses.</title>
        <authorList>
            <person name="Belcaid M."/>
            <person name="Bergeron A."/>
            <person name="Poisson G."/>
        </authorList>
    </citation>
    <scope>FUNCTION</scope>
</reference>
<gene>
    <name type="primary">TMP</name>
    <name type="ORF">ORF52</name>
</gene>
<accession>E7DNB6</accession>
<sequence>MDFGSIAAKMTLDISNFTSQLNLAQSQAQRLALESSKSFQIGSALTGLGKGLTTAVTLPLMGFAAASIKVGNEFQAQMSRVQAIAGATAEELGRMKTQAIDLGAKTAFSAKEAAQGMENLASAGFQVNEIMDAMPGVLDLAAVSGGDVAASSEAMASSLRAFGLEANQAGHVADVFARAAADTNAETSDMAEAMKYVAPVAHSMGLSLEETAASIGIMADAGIKGSQAGTTLRGALSRIAKPTKAMVKSMQELGVSFYDANGNMIPLREQIAQLKTATAGLTQEERNRHLVTLYGQNSLSGMLALLDAGPEKLDKMTNALVNSDGAAKEMAETMQDNLASKIEQMGGAFESVAIIVQQILEPALAKIVGAITKVLEAFVNMSPIGQKMVVIFAGMVAALGPLLLIAGMVMTTIVKLRIAIQFLGPAFMGTMGTIAGVIAIFYALVAVFMIAYTKSERFRNFINSLAPAIKAGFGGALEWLLPRLKELGEWLQKAGEKAKEFGQSVGSKVSKLLEQFGISIGQAGGSIGQFIGNVLERLGGAFGKVGGVISIAVSLVTKFGLAFLGITGPLGIAISLLVSFLTAWARTGEFNADGITQVFENLTNTIQSTADFISQYLPVFVEKGTQILVKIIEGIASAVPQVVEVISQVIENIVMTISTVMPQLVEAGIKILEALINGLVQSLPTIIQAAVQIITALFNGLVQALPTLIQAGLQILSALINGLVQALPAIIQAAVQIIMSLVQALIENLPMIIEAAMQIIMGLVNALIENIGPILEAGIQILMALIEGLIQVLPELITAAIQIITSLLEAILSNLPQLLEAGVKLLLSLLQGLLNMLPQLIAGALQIMMALLKAVIDFVPKLLQAGVQLLKALIQGIASLLGSLLSTAGNMLSSLVSKIASFVGQMVSGGANLIRNFISGIGSMIGSAVSKIGSMGTSIVSKVTGFAGQMVSAGVNLVRGFINGISSMVSSAVSAAANMASSALNAVKGFLGIHSPSRVMEQMGIYTGQGFVNGIGNMIRTTRDKAKEMAETVTEALSDVKMDIQENGVIEKVKSVYEKMADQLPETLPAPDFEDVRKAAGSPRVDLFNTGSDNPNQPQSQSKNNQGEQTVVNIGTIVVRNNDDVDKLSRGLYNRSKETLSGFGNIVTP</sequence>
<evidence type="ECO:0000255" key="1"/>
<evidence type="ECO:0000256" key="2">
    <source>
        <dbReference type="SAM" id="MobiDB-lite"/>
    </source>
</evidence>
<evidence type="ECO:0000269" key="3">
    <source>
    </source>
</evidence>
<evidence type="ECO:0000305" key="4"/>
<organism>
    <name type="scientific">Pneumococcus phage Dp-1</name>
    <name type="common">Bacteriophage Dp-1</name>
    <dbReference type="NCBI Taxonomy" id="59241"/>
    <lineage>
        <taxon>Viruses</taxon>
        <taxon>Duplodnaviria</taxon>
        <taxon>Heunggongvirae</taxon>
        <taxon>Uroviricota</taxon>
        <taxon>Caudoviricetes</taxon>
    </lineage>
</organism>
<feature type="chain" id="PRO_0000419290" description="Tape measure protein">
    <location>
        <begin position="1"/>
        <end position="1149"/>
    </location>
</feature>
<feature type="transmembrane region" description="Helical" evidence="1">
    <location>
        <begin position="389"/>
        <end position="409"/>
    </location>
</feature>
<feature type="transmembrane region" description="Helical" evidence="1">
    <location>
        <begin position="431"/>
        <end position="451"/>
    </location>
</feature>
<feature type="transmembrane region" description="Helical" evidence="1">
    <location>
        <begin position="561"/>
        <end position="581"/>
    </location>
</feature>
<feature type="transmembrane region" description="Helical" evidence="1">
    <location>
        <begin position="689"/>
        <end position="709"/>
    </location>
</feature>
<feature type="transmembrane region" description="Helical" evidence="1">
    <location>
        <begin position="726"/>
        <end position="746"/>
    </location>
</feature>
<feature type="transmembrane region" description="Helical" evidence="1">
    <location>
        <begin position="781"/>
        <end position="801"/>
    </location>
</feature>
<feature type="transmembrane region" description="Helical" evidence="1">
    <location>
        <begin position="840"/>
        <end position="860"/>
    </location>
</feature>
<feature type="transmembrane region" description="Helical" evidence="1">
    <location>
        <begin position="865"/>
        <end position="885"/>
    </location>
</feature>
<feature type="region of interest" description="Disordered" evidence="2">
    <location>
        <begin position="1084"/>
        <end position="1109"/>
    </location>
</feature>
<feature type="compositionally biased region" description="Low complexity" evidence="2">
    <location>
        <begin position="1094"/>
        <end position="1106"/>
    </location>
</feature>
<name>TMP_BPDP1</name>
<keyword id="KW-1043">Host membrane</keyword>
<keyword id="KW-0472">Membrane</keyword>
<keyword id="KW-1185">Reference proteome</keyword>
<keyword id="KW-0812">Transmembrane</keyword>
<keyword id="KW-1133">Transmembrane helix</keyword>
<keyword id="KW-1188">Viral release from host cell</keyword>
<keyword id="KW-1245">Viral tail assembly</keyword>
<keyword id="KW-0946">Virion</keyword>
<dbReference type="EMBL" id="HQ268735">
    <property type="protein sequence ID" value="ADT64059.1"/>
    <property type="molecule type" value="Genomic_DNA"/>
</dbReference>
<dbReference type="RefSeq" id="YP_004306940.1">
    <property type="nucleotide sequence ID" value="NC_015274.1"/>
</dbReference>
<dbReference type="SMR" id="E7DNB6"/>
<dbReference type="KEGG" id="vg:10358648"/>
<dbReference type="OrthoDB" id="270at10239"/>
<dbReference type="Proteomes" id="UP000008920">
    <property type="component" value="Genome"/>
</dbReference>
<dbReference type="GO" id="GO:0033644">
    <property type="term" value="C:host cell membrane"/>
    <property type="evidence" value="ECO:0007669"/>
    <property type="project" value="UniProtKB-SubCell"/>
</dbReference>
<dbReference type="GO" id="GO:0016020">
    <property type="term" value="C:membrane"/>
    <property type="evidence" value="ECO:0007669"/>
    <property type="project" value="UniProtKB-KW"/>
</dbReference>
<dbReference type="GO" id="GO:0044423">
    <property type="term" value="C:virion component"/>
    <property type="evidence" value="ECO:0007669"/>
    <property type="project" value="UniProtKB-KW"/>
</dbReference>
<dbReference type="GO" id="GO:0098003">
    <property type="term" value="P:viral tail assembly"/>
    <property type="evidence" value="ECO:0000314"/>
    <property type="project" value="UniProtKB"/>
</dbReference>
<dbReference type="Gene3D" id="1.25.10.10">
    <property type="entry name" value="Leucine-rich Repeat Variant"/>
    <property type="match status" value="1"/>
</dbReference>
<dbReference type="InterPro" id="IPR011989">
    <property type="entry name" value="ARM-like"/>
</dbReference>
<dbReference type="InterPro" id="IPR016024">
    <property type="entry name" value="ARM-type_fold"/>
</dbReference>
<dbReference type="InterPro" id="IPR010090">
    <property type="entry name" value="Phage_tape_meas"/>
</dbReference>
<dbReference type="NCBIfam" id="TIGR01760">
    <property type="entry name" value="tape_meas_TP901"/>
    <property type="match status" value="1"/>
</dbReference>
<dbReference type="PANTHER" id="PTHR37813">
    <property type="entry name" value="FELS-2 PROPHAGE PROTEIN"/>
    <property type="match status" value="1"/>
</dbReference>
<dbReference type="PANTHER" id="PTHR37813:SF1">
    <property type="entry name" value="FELS-2 PROPHAGE PROTEIN"/>
    <property type="match status" value="1"/>
</dbReference>
<dbReference type="Pfam" id="PF10145">
    <property type="entry name" value="PhageMin_Tail"/>
    <property type="match status" value="1"/>
</dbReference>
<dbReference type="SUPFAM" id="SSF48371">
    <property type="entry name" value="ARM repeat"/>
    <property type="match status" value="1"/>
</dbReference>
<protein>
    <recommendedName>
        <fullName>Tape measure protein</fullName>
        <shortName>TMP</shortName>
    </recommendedName>
</protein>
<comment type="function">
    <text evidence="3">Plays a role in virion tail formation. The length of the tape measure protein is proportional to the length of the phage's tail.</text>
</comment>
<comment type="subcellular location">
    <subcellularLocation>
        <location evidence="4">Host membrane</location>
        <topology evidence="4">Multi-pass membrane protein</topology>
    </subcellularLocation>
    <subcellularLocation>
        <location evidence="4">Virion</location>
    </subcellularLocation>
</comment>